<sequence>MDVLRAREQLRRRYLFPQDAEVPLEHEGYPRPETSTAVEKKEKPLPRLNIHSGFWILASIVVTYYVDFFQTVKENFHTSSWFLFGSALLLVSVSIAFYCIVYLEWYRGIEDYDIKYPALIPITTATFIVAGICFNVALWHVWSFFTPVLLFTQFMGVVMLTSLLG</sequence>
<dbReference type="EMBL" id="BC102284">
    <property type="protein sequence ID" value="AAI02285.1"/>
    <property type="molecule type" value="mRNA"/>
</dbReference>
<dbReference type="RefSeq" id="NP_001029626.1">
    <property type="nucleotide sequence ID" value="NM_001034454.2"/>
</dbReference>
<dbReference type="FunCoup" id="Q3T0S0">
    <property type="interactions" value="1396"/>
</dbReference>
<dbReference type="STRING" id="9913.ENSBTAP00000069982"/>
<dbReference type="PaxDb" id="9913-ENSBTAP00000004760"/>
<dbReference type="GeneID" id="513824"/>
<dbReference type="KEGG" id="bta:513824"/>
<dbReference type="CTD" id="85013"/>
<dbReference type="VEuPathDB" id="HostDB:ENSBTAG00000003652"/>
<dbReference type="eggNOG" id="ENOG502RZ1U">
    <property type="taxonomic scope" value="Eukaryota"/>
</dbReference>
<dbReference type="HOGENOM" id="CLU_117906_1_0_1"/>
<dbReference type="InParanoid" id="Q3T0S0"/>
<dbReference type="OMA" id="KESGWFV"/>
<dbReference type="OrthoDB" id="58903at2759"/>
<dbReference type="TreeFam" id="TF328406"/>
<dbReference type="Proteomes" id="UP000009136">
    <property type="component" value="Chromosome 6"/>
</dbReference>
<dbReference type="Bgee" id="ENSBTAG00000003652">
    <property type="expression patterns" value="Expressed in oocyte and 104 other cell types or tissues"/>
</dbReference>
<dbReference type="GO" id="GO:0016020">
    <property type="term" value="C:membrane"/>
    <property type="evidence" value="ECO:0007669"/>
    <property type="project" value="UniProtKB-SubCell"/>
</dbReference>
<dbReference type="InterPro" id="IPR033579">
    <property type="entry name" value="TMEM128"/>
</dbReference>
<dbReference type="PANTHER" id="PTHR31134">
    <property type="entry name" value="TRANSMEMBRANE PROTEIN 128"/>
    <property type="match status" value="1"/>
</dbReference>
<dbReference type="PANTHER" id="PTHR31134:SF1">
    <property type="entry name" value="TRANSMEMBRANE PROTEIN 128"/>
    <property type="match status" value="1"/>
</dbReference>
<dbReference type="Pfam" id="PF20479">
    <property type="entry name" value="TMEM128"/>
    <property type="match status" value="1"/>
</dbReference>
<accession>Q3T0S0</accession>
<organism>
    <name type="scientific">Bos taurus</name>
    <name type="common">Bovine</name>
    <dbReference type="NCBI Taxonomy" id="9913"/>
    <lineage>
        <taxon>Eukaryota</taxon>
        <taxon>Metazoa</taxon>
        <taxon>Chordata</taxon>
        <taxon>Craniata</taxon>
        <taxon>Vertebrata</taxon>
        <taxon>Euteleostomi</taxon>
        <taxon>Mammalia</taxon>
        <taxon>Eutheria</taxon>
        <taxon>Laurasiatheria</taxon>
        <taxon>Artiodactyla</taxon>
        <taxon>Ruminantia</taxon>
        <taxon>Pecora</taxon>
        <taxon>Bovidae</taxon>
        <taxon>Bovinae</taxon>
        <taxon>Bos</taxon>
    </lineage>
</organism>
<feature type="chain" id="PRO_0000254555" description="Transmembrane protein 128">
    <location>
        <begin position="1"/>
        <end position="165"/>
    </location>
</feature>
<feature type="transmembrane region" description="Helical" evidence="1">
    <location>
        <begin position="49"/>
        <end position="69"/>
    </location>
</feature>
<feature type="transmembrane region" description="Helical" evidence="1">
    <location>
        <begin position="81"/>
        <end position="101"/>
    </location>
</feature>
<feature type="transmembrane region" description="Helical" evidence="1">
    <location>
        <begin position="119"/>
        <end position="139"/>
    </location>
</feature>
<feature type="transmembrane region" description="Helical" evidence="1">
    <location>
        <begin position="144"/>
        <end position="164"/>
    </location>
</feature>
<proteinExistence type="evidence at transcript level"/>
<comment type="subcellular location">
    <subcellularLocation>
        <location evidence="2">Membrane</location>
        <topology evidence="2">Multi-pass membrane protein</topology>
    </subcellularLocation>
</comment>
<protein>
    <recommendedName>
        <fullName>Transmembrane protein 128</fullName>
    </recommendedName>
</protein>
<keyword id="KW-0472">Membrane</keyword>
<keyword id="KW-1185">Reference proteome</keyword>
<keyword id="KW-0812">Transmembrane</keyword>
<keyword id="KW-1133">Transmembrane helix</keyword>
<gene>
    <name type="primary">TMEM128</name>
</gene>
<name>TM128_BOVIN</name>
<reference key="1">
    <citation type="submission" date="2005-08" db="EMBL/GenBank/DDBJ databases">
        <authorList>
            <consortium name="NIH - Mammalian Gene Collection (MGC) project"/>
        </authorList>
    </citation>
    <scope>NUCLEOTIDE SEQUENCE [LARGE SCALE MRNA]</scope>
    <source>
        <strain>Crossbred X Angus</strain>
        <tissue>Ileum</tissue>
    </source>
</reference>
<evidence type="ECO:0000255" key="1"/>
<evidence type="ECO:0000305" key="2"/>